<dbReference type="EMBL" id="CP000084">
    <property type="protein sequence ID" value="AAZ21918.1"/>
    <property type="molecule type" value="Genomic_DNA"/>
</dbReference>
<dbReference type="RefSeq" id="WP_006996813.1">
    <property type="nucleotide sequence ID" value="NC_007205.1"/>
</dbReference>
<dbReference type="SMR" id="Q4FLM0"/>
<dbReference type="STRING" id="335992.SAR11_1115"/>
<dbReference type="GeneID" id="66295604"/>
<dbReference type="KEGG" id="pub:SAR11_1115"/>
<dbReference type="eggNOG" id="COG0089">
    <property type="taxonomic scope" value="Bacteria"/>
</dbReference>
<dbReference type="HOGENOM" id="CLU_037562_3_1_5"/>
<dbReference type="OrthoDB" id="9793353at2"/>
<dbReference type="Proteomes" id="UP000002528">
    <property type="component" value="Chromosome"/>
</dbReference>
<dbReference type="GO" id="GO:1990904">
    <property type="term" value="C:ribonucleoprotein complex"/>
    <property type="evidence" value="ECO:0007669"/>
    <property type="project" value="UniProtKB-KW"/>
</dbReference>
<dbReference type="GO" id="GO:0005840">
    <property type="term" value="C:ribosome"/>
    <property type="evidence" value="ECO:0007669"/>
    <property type="project" value="UniProtKB-KW"/>
</dbReference>
<dbReference type="GO" id="GO:0019843">
    <property type="term" value="F:rRNA binding"/>
    <property type="evidence" value="ECO:0007669"/>
    <property type="project" value="UniProtKB-UniRule"/>
</dbReference>
<dbReference type="GO" id="GO:0003735">
    <property type="term" value="F:structural constituent of ribosome"/>
    <property type="evidence" value="ECO:0007669"/>
    <property type="project" value="InterPro"/>
</dbReference>
<dbReference type="GO" id="GO:0006412">
    <property type="term" value="P:translation"/>
    <property type="evidence" value="ECO:0007669"/>
    <property type="project" value="UniProtKB-UniRule"/>
</dbReference>
<dbReference type="Gene3D" id="3.30.70.330">
    <property type="match status" value="1"/>
</dbReference>
<dbReference type="HAMAP" id="MF_01369_B">
    <property type="entry name" value="Ribosomal_uL23_B"/>
    <property type="match status" value="1"/>
</dbReference>
<dbReference type="InterPro" id="IPR012677">
    <property type="entry name" value="Nucleotide-bd_a/b_plait_sf"/>
</dbReference>
<dbReference type="InterPro" id="IPR013025">
    <property type="entry name" value="Ribosomal_uL23-like"/>
</dbReference>
<dbReference type="InterPro" id="IPR012678">
    <property type="entry name" value="Ribosomal_uL23/eL15/eS24_sf"/>
</dbReference>
<dbReference type="InterPro" id="IPR001014">
    <property type="entry name" value="Ribosomal_uL23_CS"/>
</dbReference>
<dbReference type="NCBIfam" id="NF004363">
    <property type="entry name" value="PRK05738.2-4"/>
    <property type="match status" value="1"/>
</dbReference>
<dbReference type="PANTHER" id="PTHR11620">
    <property type="entry name" value="60S RIBOSOMAL PROTEIN L23A"/>
    <property type="match status" value="1"/>
</dbReference>
<dbReference type="Pfam" id="PF00276">
    <property type="entry name" value="Ribosomal_L23"/>
    <property type="match status" value="1"/>
</dbReference>
<dbReference type="SUPFAM" id="SSF54189">
    <property type="entry name" value="Ribosomal proteins S24e, L23 and L15e"/>
    <property type="match status" value="1"/>
</dbReference>
<dbReference type="PROSITE" id="PS00050">
    <property type="entry name" value="RIBOSOMAL_L23"/>
    <property type="match status" value="1"/>
</dbReference>
<accession>Q4FLM0</accession>
<name>RL23_PELUB</name>
<comment type="function">
    <text evidence="1">One of the early assembly proteins it binds 23S rRNA. One of the proteins that surrounds the polypeptide exit tunnel on the outside of the ribosome. Forms the main docking site for trigger factor binding to the ribosome.</text>
</comment>
<comment type="subunit">
    <text evidence="1">Part of the 50S ribosomal subunit. Contacts protein L29, and trigger factor when it is bound to the ribosome.</text>
</comment>
<comment type="similarity">
    <text evidence="1">Belongs to the universal ribosomal protein uL23 family.</text>
</comment>
<reference key="1">
    <citation type="journal article" date="2005" name="Science">
        <title>Genome streamlining in a cosmopolitan oceanic bacterium.</title>
        <authorList>
            <person name="Giovannoni S.J."/>
            <person name="Tripp H.J."/>
            <person name="Givan S."/>
            <person name="Podar M."/>
            <person name="Vergin K.L."/>
            <person name="Baptista D."/>
            <person name="Bibbs L."/>
            <person name="Eads J."/>
            <person name="Richardson T.H."/>
            <person name="Noordewier M."/>
            <person name="Rappe M.S."/>
            <person name="Short J.M."/>
            <person name="Carrington J.C."/>
            <person name="Mathur E.J."/>
        </authorList>
    </citation>
    <scope>NUCLEOTIDE SEQUENCE [LARGE SCALE GENOMIC DNA]</scope>
    <source>
        <strain>HTCC1062</strain>
    </source>
</reference>
<feature type="chain" id="PRO_1000068130" description="Large ribosomal subunit protein uL23">
    <location>
        <begin position="1"/>
        <end position="97"/>
    </location>
</feature>
<keyword id="KW-1185">Reference proteome</keyword>
<keyword id="KW-0687">Ribonucleoprotein</keyword>
<keyword id="KW-0689">Ribosomal protein</keyword>
<keyword id="KW-0694">RNA-binding</keyword>
<keyword id="KW-0699">rRNA-binding</keyword>
<protein>
    <recommendedName>
        <fullName evidence="1">Large ribosomal subunit protein uL23</fullName>
    </recommendedName>
    <alternativeName>
        <fullName evidence="2">50S ribosomal protein L23</fullName>
    </alternativeName>
</protein>
<organism>
    <name type="scientific">Pelagibacter ubique (strain HTCC1062)</name>
    <dbReference type="NCBI Taxonomy" id="335992"/>
    <lineage>
        <taxon>Bacteria</taxon>
        <taxon>Pseudomonadati</taxon>
        <taxon>Pseudomonadota</taxon>
        <taxon>Alphaproteobacteria</taxon>
        <taxon>Candidatus Pelagibacterales</taxon>
        <taxon>Candidatus Pelagibacteraceae</taxon>
        <taxon>Candidatus Pelagibacter</taxon>
    </lineage>
</organism>
<sequence>MDKIHLYDKILSPMVTEKTTNLSEQNKIVFKVPRAANKTNLKKNIEKIFKVNVTKINIINKQNRTKVARGKKVNVQGYKKAIITLKKGQSIDLTSGI</sequence>
<gene>
    <name evidence="1" type="primary">rplW</name>
    <name type="ordered locus">SAR11_1115</name>
</gene>
<proteinExistence type="inferred from homology"/>
<evidence type="ECO:0000255" key="1">
    <source>
        <dbReference type="HAMAP-Rule" id="MF_01369"/>
    </source>
</evidence>
<evidence type="ECO:0000305" key="2"/>